<comment type="function">
    <text evidence="1">Part of the MsrPQ system that repairs oxidized periplasmic proteins containing methionine sulfoxide residues (Met-O), using respiratory chain electrons. Thus protects these proteins from oxidative-stress damage caused by reactive species of oxygen and chlorine generated by the host defense mechanisms. MsrPQ is essential for the maintenance of envelope integrity under bleach stress, rescuing a wide series of structurally unrelated periplasmic proteins from methionine oxidation. The catalytic subunit MsrP is non-stereospecific, being able to reduce both (R-) and (S-) diastereoisomers of methionine sulfoxide.</text>
</comment>
<comment type="catalytic activity">
    <reaction evidence="1">
        <text>L-methionyl-[protein] + a quinone + H2O = L-methionyl-(S)-S-oxide-[protein] + a quinol</text>
        <dbReference type="Rhea" id="RHEA:51292"/>
        <dbReference type="Rhea" id="RHEA-COMP:12313"/>
        <dbReference type="Rhea" id="RHEA-COMP:12315"/>
        <dbReference type="ChEBI" id="CHEBI:15377"/>
        <dbReference type="ChEBI" id="CHEBI:16044"/>
        <dbReference type="ChEBI" id="CHEBI:24646"/>
        <dbReference type="ChEBI" id="CHEBI:44120"/>
        <dbReference type="ChEBI" id="CHEBI:132124"/>
    </reaction>
</comment>
<comment type="catalytic activity">
    <reaction evidence="1">
        <text>L-methionyl-[protein] + a quinone + H2O = L-methionyl-(R)-S-oxide-[protein] + a quinol</text>
        <dbReference type="Rhea" id="RHEA:51296"/>
        <dbReference type="Rhea" id="RHEA-COMP:12313"/>
        <dbReference type="Rhea" id="RHEA-COMP:12314"/>
        <dbReference type="ChEBI" id="CHEBI:15377"/>
        <dbReference type="ChEBI" id="CHEBI:16044"/>
        <dbReference type="ChEBI" id="CHEBI:24646"/>
        <dbReference type="ChEBI" id="CHEBI:45764"/>
        <dbReference type="ChEBI" id="CHEBI:132124"/>
    </reaction>
</comment>
<comment type="cofactor">
    <cofactor evidence="1">
        <name>Mo-molybdopterin</name>
        <dbReference type="ChEBI" id="CHEBI:71302"/>
    </cofactor>
    <text evidence="1">Binds 1 Mo-molybdopterin (Mo-MPT) cofactor per subunit.</text>
</comment>
<comment type="subunit">
    <text evidence="1">Heterodimer of a catalytic subunit (MsrP) and a heme-binding subunit (MsrQ).</text>
</comment>
<comment type="subcellular location">
    <subcellularLocation>
        <location evidence="1">Periplasm</location>
    </subcellularLocation>
    <text evidence="1">Is attached to the inner membrane when interacting with the MsrQ subunit.</text>
</comment>
<comment type="PTM">
    <text evidence="1">Predicted to be exported by the Tat system. The position of the signal peptide cleavage has not been experimentally proven.</text>
</comment>
<comment type="similarity">
    <text evidence="1">Belongs to the MsrP family.</text>
</comment>
<dbReference type="EC" id="1.8.5.-" evidence="1"/>
<dbReference type="EMBL" id="CP000783">
    <property type="protein sequence ID" value="ABU78851.1"/>
    <property type="molecule type" value="Genomic_DNA"/>
</dbReference>
<dbReference type="RefSeq" id="WP_012125991.1">
    <property type="nucleotide sequence ID" value="NC_009778.1"/>
</dbReference>
<dbReference type="SMR" id="A7MNQ9"/>
<dbReference type="KEGG" id="esa:ESA_03641"/>
<dbReference type="PATRIC" id="fig|290339.8.peg.3245"/>
<dbReference type="HOGENOM" id="CLU_045520_0_0_6"/>
<dbReference type="Proteomes" id="UP000000260">
    <property type="component" value="Chromosome"/>
</dbReference>
<dbReference type="GO" id="GO:0042597">
    <property type="term" value="C:periplasmic space"/>
    <property type="evidence" value="ECO:0007669"/>
    <property type="project" value="UniProtKB-SubCell"/>
</dbReference>
<dbReference type="GO" id="GO:0046872">
    <property type="term" value="F:metal ion binding"/>
    <property type="evidence" value="ECO:0007669"/>
    <property type="project" value="UniProtKB-KW"/>
</dbReference>
<dbReference type="GO" id="GO:0043546">
    <property type="term" value="F:molybdopterin cofactor binding"/>
    <property type="evidence" value="ECO:0007669"/>
    <property type="project" value="UniProtKB-UniRule"/>
</dbReference>
<dbReference type="GO" id="GO:0016672">
    <property type="term" value="F:oxidoreductase activity, acting on a sulfur group of donors, quinone or similar compound as acceptor"/>
    <property type="evidence" value="ECO:0007669"/>
    <property type="project" value="UniProtKB-UniRule"/>
</dbReference>
<dbReference type="GO" id="GO:0030091">
    <property type="term" value="P:protein repair"/>
    <property type="evidence" value="ECO:0007669"/>
    <property type="project" value="UniProtKB-UniRule"/>
</dbReference>
<dbReference type="CDD" id="cd02107">
    <property type="entry name" value="YedY_like_Moco"/>
    <property type="match status" value="1"/>
</dbReference>
<dbReference type="Gene3D" id="3.90.420.10">
    <property type="entry name" value="Oxidoreductase, molybdopterin-binding domain"/>
    <property type="match status" value="1"/>
</dbReference>
<dbReference type="HAMAP" id="MF_01206">
    <property type="entry name" value="MsrP"/>
    <property type="match status" value="1"/>
</dbReference>
<dbReference type="InterPro" id="IPR022867">
    <property type="entry name" value="MsrP"/>
</dbReference>
<dbReference type="InterPro" id="IPR000572">
    <property type="entry name" value="OxRdtase_Mopterin-bd_dom"/>
</dbReference>
<dbReference type="InterPro" id="IPR036374">
    <property type="entry name" value="OxRdtase_Mopterin-bd_sf"/>
</dbReference>
<dbReference type="InterPro" id="IPR006311">
    <property type="entry name" value="TAT_signal"/>
</dbReference>
<dbReference type="NCBIfam" id="NF003767">
    <property type="entry name" value="PRK05363.1"/>
    <property type="match status" value="1"/>
</dbReference>
<dbReference type="PANTHER" id="PTHR43032">
    <property type="entry name" value="PROTEIN-METHIONINE-SULFOXIDE REDUCTASE"/>
    <property type="match status" value="1"/>
</dbReference>
<dbReference type="PANTHER" id="PTHR43032:SF3">
    <property type="entry name" value="PROTEIN-METHIONINE-SULFOXIDE REDUCTASE CATALYTIC SUBUNIT MSRP"/>
    <property type="match status" value="1"/>
</dbReference>
<dbReference type="Pfam" id="PF00174">
    <property type="entry name" value="Oxidored_molyb"/>
    <property type="match status" value="1"/>
</dbReference>
<dbReference type="SUPFAM" id="SSF56524">
    <property type="entry name" value="Oxidoreductase molybdopterin-binding domain"/>
    <property type="match status" value="1"/>
</dbReference>
<dbReference type="PROSITE" id="PS51318">
    <property type="entry name" value="TAT"/>
    <property type="match status" value="1"/>
</dbReference>
<accession>A7MNQ9</accession>
<feature type="signal peptide" description="Tat-type signal" evidence="1">
    <location>
        <begin position="1"/>
        <end position="44"/>
    </location>
</feature>
<feature type="chain" id="PRO_1000066159" description="Protein-methionine-sulfoxide reductase catalytic subunit MsrP" evidence="1">
    <location>
        <begin position="45"/>
        <end position="334"/>
    </location>
</feature>
<feature type="binding site" evidence="1">
    <location>
        <position position="88"/>
    </location>
    <ligand>
        <name>Mo-molybdopterin</name>
        <dbReference type="ChEBI" id="CHEBI:71302"/>
    </ligand>
</feature>
<feature type="binding site" evidence="1">
    <location>
        <begin position="91"/>
        <end position="92"/>
    </location>
    <ligand>
        <name>Mo-molybdopterin</name>
        <dbReference type="ChEBI" id="CHEBI:71302"/>
    </ligand>
</feature>
<feature type="binding site" evidence="1">
    <location>
        <position position="146"/>
    </location>
    <ligand>
        <name>Mo-molybdopterin</name>
        <dbReference type="ChEBI" id="CHEBI:71302"/>
    </ligand>
    <ligandPart>
        <name>Mo</name>
        <dbReference type="ChEBI" id="CHEBI:28685"/>
    </ligandPart>
</feature>
<feature type="binding site" evidence="1">
    <location>
        <position position="181"/>
    </location>
    <ligand>
        <name>Mo-molybdopterin</name>
        <dbReference type="ChEBI" id="CHEBI:71302"/>
    </ligand>
</feature>
<feature type="binding site" evidence="1">
    <location>
        <position position="233"/>
    </location>
    <ligand>
        <name>Mo-molybdopterin</name>
        <dbReference type="ChEBI" id="CHEBI:71302"/>
    </ligand>
</feature>
<feature type="binding site" evidence="1">
    <location>
        <position position="238"/>
    </location>
    <ligand>
        <name>Mo-molybdopterin</name>
        <dbReference type="ChEBI" id="CHEBI:71302"/>
    </ligand>
</feature>
<feature type="binding site" evidence="1">
    <location>
        <begin position="249"/>
        <end position="251"/>
    </location>
    <ligand>
        <name>Mo-molybdopterin</name>
        <dbReference type="ChEBI" id="CHEBI:71302"/>
    </ligand>
</feature>
<protein>
    <recommendedName>
        <fullName evidence="1">Protein-methionine-sulfoxide reductase catalytic subunit MsrP</fullName>
        <ecNumber evidence="1">1.8.5.-</ecNumber>
    </recommendedName>
</protein>
<name>MSRP_CROS8</name>
<reference key="1">
    <citation type="journal article" date="2010" name="PLoS ONE">
        <title>Genome sequence of Cronobacter sakazakii BAA-894 and comparative genomic hybridization analysis with other Cronobacter species.</title>
        <authorList>
            <person name="Kucerova E."/>
            <person name="Clifton S.W."/>
            <person name="Xia X.Q."/>
            <person name="Long F."/>
            <person name="Porwollik S."/>
            <person name="Fulton L."/>
            <person name="Fronick C."/>
            <person name="Minx P."/>
            <person name="Kyung K."/>
            <person name="Warren W."/>
            <person name="Fulton R."/>
            <person name="Feng D."/>
            <person name="Wollam A."/>
            <person name="Shah N."/>
            <person name="Bhonagiri V."/>
            <person name="Nash W.E."/>
            <person name="Hallsworth-Pepin K."/>
            <person name="Wilson R.K."/>
            <person name="McClelland M."/>
            <person name="Forsythe S.J."/>
        </authorList>
    </citation>
    <scope>NUCLEOTIDE SEQUENCE [LARGE SCALE GENOMIC DNA]</scope>
    <source>
        <strain>ATCC BAA-894</strain>
    </source>
</reference>
<organism>
    <name type="scientific">Cronobacter sakazakii (strain ATCC BAA-894)</name>
    <name type="common">Enterobacter sakazakii</name>
    <dbReference type="NCBI Taxonomy" id="290339"/>
    <lineage>
        <taxon>Bacteria</taxon>
        <taxon>Pseudomonadati</taxon>
        <taxon>Pseudomonadota</taxon>
        <taxon>Gammaproteobacteria</taxon>
        <taxon>Enterobacterales</taxon>
        <taxon>Enterobacteriaceae</taxon>
        <taxon>Cronobacter</taxon>
    </lineage>
</organism>
<sequence>MKKVSRLTEADVTAESAFFMQRRQVLKALGITTAALSLPTAAHADVLSWFKGNDRPKAPAGAPLDFTRPAQYQAKLDLTPEDKVTGYNNFYEFGLDKADPAANAGSLKTNPWTLKIGGEVAKPLTLDHDDLTKKFPLEERIYRMRCVEAWSMVVPWIGFPLHKLLALVEPTSNAKYVAFKTLYAPDIMPGQKDRFIGGGLEYPYVEALRLDEAMHPLTMLTTGVYGKALPPQNGAPVRLTVPWKYGFKGIKSIVSITLTRERPPTTWNMAAPDEYGFYANVNPHVDHPRWSQASERVIGSGGVLDVKRQPTLLFNGYADEVASLYKGLDLRENF</sequence>
<evidence type="ECO:0000255" key="1">
    <source>
        <dbReference type="HAMAP-Rule" id="MF_01206"/>
    </source>
</evidence>
<proteinExistence type="inferred from homology"/>
<gene>
    <name evidence="1" type="primary">msrP</name>
    <name type="ordered locus">ESA_03641</name>
</gene>
<keyword id="KW-0479">Metal-binding</keyword>
<keyword id="KW-0500">Molybdenum</keyword>
<keyword id="KW-0560">Oxidoreductase</keyword>
<keyword id="KW-0574">Periplasm</keyword>
<keyword id="KW-1185">Reference proteome</keyword>
<keyword id="KW-0732">Signal</keyword>